<evidence type="ECO:0000255" key="1">
    <source>
        <dbReference type="HAMAP-Rule" id="MF_01235"/>
    </source>
</evidence>
<name>NANE_SHIBS</name>
<keyword id="KW-0119">Carbohydrate metabolism</keyword>
<keyword id="KW-0413">Isomerase</keyword>
<proteinExistence type="inferred from homology"/>
<sequence>MSLLAQLDQKIAANGGLIVSCQPVPDSPLDKPEIVAAMALAAEQAGAVAIRIEGVANLQATRAVVSVPIIGIVKRDLEDSPVRITAYIEDVDALAQAGADIIAIDGTDRPRPVPVETLLARIHHHGLLAMTDCSTPEDGLACQKLGAEIIGTTLSGYTTPETPEEPDLALVKTLSDAGCRVIAEGRYNTPAQAADAMRHGAWAVTVGSAITRLEHICQWYNTAMKKAVL</sequence>
<dbReference type="EC" id="5.1.3.9" evidence="1"/>
<dbReference type="EMBL" id="CP000036">
    <property type="protein sequence ID" value="ABB67666.1"/>
    <property type="molecule type" value="Genomic_DNA"/>
</dbReference>
<dbReference type="RefSeq" id="WP_000054239.1">
    <property type="nucleotide sequence ID" value="NC_007613.1"/>
</dbReference>
<dbReference type="SMR" id="Q31W92"/>
<dbReference type="KEGG" id="sbo:SBO_3166"/>
<dbReference type="HOGENOM" id="CLU_086300_0_0_6"/>
<dbReference type="UniPathway" id="UPA00629">
    <property type="reaction ID" value="UER00682"/>
</dbReference>
<dbReference type="Proteomes" id="UP000007067">
    <property type="component" value="Chromosome"/>
</dbReference>
<dbReference type="GO" id="GO:0005829">
    <property type="term" value="C:cytosol"/>
    <property type="evidence" value="ECO:0007669"/>
    <property type="project" value="TreeGrafter"/>
</dbReference>
<dbReference type="GO" id="GO:0047465">
    <property type="term" value="F:N-acylglucosamine-6-phosphate 2-epimerase activity"/>
    <property type="evidence" value="ECO:0007669"/>
    <property type="project" value="UniProtKB-EC"/>
</dbReference>
<dbReference type="GO" id="GO:0005975">
    <property type="term" value="P:carbohydrate metabolic process"/>
    <property type="evidence" value="ECO:0007669"/>
    <property type="project" value="UniProtKB-UniRule"/>
</dbReference>
<dbReference type="GO" id="GO:0006053">
    <property type="term" value="P:N-acetylmannosamine catabolic process"/>
    <property type="evidence" value="ECO:0007669"/>
    <property type="project" value="TreeGrafter"/>
</dbReference>
<dbReference type="GO" id="GO:0019262">
    <property type="term" value="P:N-acetylneuraminate catabolic process"/>
    <property type="evidence" value="ECO:0007669"/>
    <property type="project" value="UniProtKB-UniRule"/>
</dbReference>
<dbReference type="CDD" id="cd04729">
    <property type="entry name" value="NanE"/>
    <property type="match status" value="1"/>
</dbReference>
<dbReference type="FunFam" id="3.20.20.70:FF:000035">
    <property type="entry name" value="Putative N-acetylmannosamine-6-phosphate 2-epimerase"/>
    <property type="match status" value="1"/>
</dbReference>
<dbReference type="Gene3D" id="3.20.20.70">
    <property type="entry name" value="Aldolase class I"/>
    <property type="match status" value="1"/>
</dbReference>
<dbReference type="HAMAP" id="MF_01235">
    <property type="entry name" value="ManNAc6P_epimer"/>
    <property type="match status" value="1"/>
</dbReference>
<dbReference type="InterPro" id="IPR013785">
    <property type="entry name" value="Aldolase_TIM"/>
</dbReference>
<dbReference type="InterPro" id="IPR007260">
    <property type="entry name" value="NanE"/>
</dbReference>
<dbReference type="InterPro" id="IPR011060">
    <property type="entry name" value="RibuloseP-bd_barrel"/>
</dbReference>
<dbReference type="NCBIfam" id="NF002231">
    <property type="entry name" value="PRK01130.1"/>
    <property type="match status" value="1"/>
</dbReference>
<dbReference type="PANTHER" id="PTHR36204">
    <property type="entry name" value="N-ACETYLMANNOSAMINE-6-PHOSPHATE 2-EPIMERASE-RELATED"/>
    <property type="match status" value="1"/>
</dbReference>
<dbReference type="PANTHER" id="PTHR36204:SF1">
    <property type="entry name" value="N-ACETYLMANNOSAMINE-6-PHOSPHATE 2-EPIMERASE-RELATED"/>
    <property type="match status" value="1"/>
</dbReference>
<dbReference type="Pfam" id="PF04131">
    <property type="entry name" value="NanE"/>
    <property type="match status" value="1"/>
</dbReference>
<dbReference type="SUPFAM" id="SSF51366">
    <property type="entry name" value="Ribulose-phoshate binding barrel"/>
    <property type="match status" value="1"/>
</dbReference>
<organism>
    <name type="scientific">Shigella boydii serotype 4 (strain Sb227)</name>
    <dbReference type="NCBI Taxonomy" id="300268"/>
    <lineage>
        <taxon>Bacteria</taxon>
        <taxon>Pseudomonadati</taxon>
        <taxon>Pseudomonadota</taxon>
        <taxon>Gammaproteobacteria</taxon>
        <taxon>Enterobacterales</taxon>
        <taxon>Enterobacteriaceae</taxon>
        <taxon>Shigella</taxon>
    </lineage>
</organism>
<feature type="chain" id="PRO_0000301480" description="Putative N-acetylmannosamine-6-phosphate 2-epimerase">
    <location>
        <begin position="1"/>
        <end position="229"/>
    </location>
</feature>
<gene>
    <name evidence="1" type="primary">nanE</name>
    <name type="ordered locus">SBO_3166</name>
</gene>
<reference key="1">
    <citation type="journal article" date="2005" name="Nucleic Acids Res.">
        <title>Genome dynamics and diversity of Shigella species, the etiologic agents of bacillary dysentery.</title>
        <authorList>
            <person name="Yang F."/>
            <person name="Yang J."/>
            <person name="Zhang X."/>
            <person name="Chen L."/>
            <person name="Jiang Y."/>
            <person name="Yan Y."/>
            <person name="Tang X."/>
            <person name="Wang J."/>
            <person name="Xiong Z."/>
            <person name="Dong J."/>
            <person name="Xue Y."/>
            <person name="Zhu Y."/>
            <person name="Xu X."/>
            <person name="Sun L."/>
            <person name="Chen S."/>
            <person name="Nie H."/>
            <person name="Peng J."/>
            <person name="Xu J."/>
            <person name="Wang Y."/>
            <person name="Yuan Z."/>
            <person name="Wen Y."/>
            <person name="Yao Z."/>
            <person name="Shen Y."/>
            <person name="Qiang B."/>
            <person name="Hou Y."/>
            <person name="Yu J."/>
            <person name="Jin Q."/>
        </authorList>
    </citation>
    <scope>NUCLEOTIDE SEQUENCE [LARGE SCALE GENOMIC DNA]</scope>
    <source>
        <strain>Sb227</strain>
    </source>
</reference>
<protein>
    <recommendedName>
        <fullName evidence="1">Putative N-acetylmannosamine-6-phosphate 2-epimerase</fullName>
        <ecNumber evidence="1">5.1.3.9</ecNumber>
    </recommendedName>
    <alternativeName>
        <fullName evidence="1">ManNAc-6-P epimerase</fullName>
    </alternativeName>
</protein>
<comment type="function">
    <text evidence="1">Converts N-acetylmannosamine-6-phosphate (ManNAc-6-P) to N-acetylglucosamine-6-phosphate (GlcNAc-6-P).</text>
</comment>
<comment type="catalytic activity">
    <reaction evidence="1">
        <text>an N-acyl-D-glucosamine 6-phosphate = an N-acyl-D-mannosamine 6-phosphate</text>
        <dbReference type="Rhea" id="RHEA:23932"/>
        <dbReference type="ChEBI" id="CHEBI:57599"/>
        <dbReference type="ChEBI" id="CHEBI:57666"/>
        <dbReference type="EC" id="5.1.3.9"/>
    </reaction>
</comment>
<comment type="pathway">
    <text evidence="1">Amino-sugar metabolism; N-acetylneuraminate degradation; D-fructose 6-phosphate from N-acetylneuraminate: step 3/5.</text>
</comment>
<comment type="similarity">
    <text evidence="1">Belongs to the NanE family.</text>
</comment>
<accession>Q31W92</accession>